<proteinExistence type="inferred from homology"/>
<reference key="1">
    <citation type="journal article" date="2008" name="Foodborne Pathog. Dis.">
        <title>The complete genome sequence and analysis of the human pathogen Campylobacter lari.</title>
        <authorList>
            <person name="Miller W.G."/>
            <person name="Wang G."/>
            <person name="Binnewies T.T."/>
            <person name="Parker C.T."/>
        </authorList>
    </citation>
    <scope>NUCLEOTIDE SEQUENCE [LARGE SCALE GENOMIC DNA]</scope>
    <source>
        <strain>RM2100 / D67 / ATCC BAA-1060</strain>
    </source>
</reference>
<evidence type="ECO:0000255" key="1">
    <source>
        <dbReference type="HAMAP-Rule" id="MF_00001"/>
    </source>
</evidence>
<sequence>MRHLITTKDFSNGEILALFKEAKEFLDEKPRTFLEGKSVTTIFFENSTRTQSSFETAARRLGAKVLKLDVSRSSSSKGETLFDTAANLDAMAPSAIVVRHKNSGVPHTLANYTHCPIVNGGDGKHAHPTQALLDLFTIMEHFDYNVKGKKIAIVGDIKNSRVAASNLELLPRFGIDITLVAPPHFMPNYPIKKTNKLKEVIDDVDIIMSLRTQTERHNIPTYASLKDYANDFCISKDLIKDKNLIILHPGPVHRNIDISDDVMADKRCKVLTQVKNGVAIRMAVLKKLILES</sequence>
<accession>B9KCT6</accession>
<name>PYRB_CAMLR</name>
<gene>
    <name evidence="1" type="primary">pyrB</name>
    <name type="ordered locus">Cla_1053</name>
</gene>
<organism>
    <name type="scientific">Campylobacter lari (strain RM2100 / D67 / ATCC BAA-1060)</name>
    <dbReference type="NCBI Taxonomy" id="306263"/>
    <lineage>
        <taxon>Bacteria</taxon>
        <taxon>Pseudomonadati</taxon>
        <taxon>Campylobacterota</taxon>
        <taxon>Epsilonproteobacteria</taxon>
        <taxon>Campylobacterales</taxon>
        <taxon>Campylobacteraceae</taxon>
        <taxon>Campylobacter</taxon>
    </lineage>
</organism>
<feature type="chain" id="PRO_1000116130" description="Aspartate carbamoyltransferase catalytic subunit">
    <location>
        <begin position="1"/>
        <end position="292"/>
    </location>
</feature>
<feature type="binding site" evidence="1">
    <location>
        <position position="49"/>
    </location>
    <ligand>
        <name>carbamoyl phosphate</name>
        <dbReference type="ChEBI" id="CHEBI:58228"/>
    </ligand>
</feature>
<feature type="binding site" evidence="1">
    <location>
        <position position="50"/>
    </location>
    <ligand>
        <name>carbamoyl phosphate</name>
        <dbReference type="ChEBI" id="CHEBI:58228"/>
    </ligand>
</feature>
<feature type="binding site" evidence="1">
    <location>
        <position position="77"/>
    </location>
    <ligand>
        <name>L-aspartate</name>
        <dbReference type="ChEBI" id="CHEBI:29991"/>
    </ligand>
</feature>
<feature type="binding site" evidence="1">
    <location>
        <position position="99"/>
    </location>
    <ligand>
        <name>carbamoyl phosphate</name>
        <dbReference type="ChEBI" id="CHEBI:58228"/>
    </ligand>
</feature>
<feature type="binding site" evidence="1">
    <location>
        <position position="127"/>
    </location>
    <ligand>
        <name>carbamoyl phosphate</name>
        <dbReference type="ChEBI" id="CHEBI:58228"/>
    </ligand>
</feature>
<feature type="binding site" evidence="1">
    <location>
        <position position="130"/>
    </location>
    <ligand>
        <name>carbamoyl phosphate</name>
        <dbReference type="ChEBI" id="CHEBI:58228"/>
    </ligand>
</feature>
<feature type="binding site" evidence="1">
    <location>
        <position position="161"/>
    </location>
    <ligand>
        <name>L-aspartate</name>
        <dbReference type="ChEBI" id="CHEBI:29991"/>
    </ligand>
</feature>
<feature type="binding site" evidence="1">
    <location>
        <position position="211"/>
    </location>
    <ligand>
        <name>L-aspartate</name>
        <dbReference type="ChEBI" id="CHEBI:29991"/>
    </ligand>
</feature>
<feature type="binding site" evidence="1">
    <location>
        <position position="250"/>
    </location>
    <ligand>
        <name>carbamoyl phosphate</name>
        <dbReference type="ChEBI" id="CHEBI:58228"/>
    </ligand>
</feature>
<feature type="binding site" evidence="1">
    <location>
        <position position="251"/>
    </location>
    <ligand>
        <name>carbamoyl phosphate</name>
        <dbReference type="ChEBI" id="CHEBI:58228"/>
    </ligand>
</feature>
<comment type="function">
    <text evidence="1">Catalyzes the condensation of carbamoyl phosphate and aspartate to form carbamoyl aspartate and inorganic phosphate, the committed step in the de novo pyrimidine nucleotide biosynthesis pathway.</text>
</comment>
<comment type="catalytic activity">
    <reaction evidence="1">
        <text>carbamoyl phosphate + L-aspartate = N-carbamoyl-L-aspartate + phosphate + H(+)</text>
        <dbReference type="Rhea" id="RHEA:20013"/>
        <dbReference type="ChEBI" id="CHEBI:15378"/>
        <dbReference type="ChEBI" id="CHEBI:29991"/>
        <dbReference type="ChEBI" id="CHEBI:32814"/>
        <dbReference type="ChEBI" id="CHEBI:43474"/>
        <dbReference type="ChEBI" id="CHEBI:58228"/>
        <dbReference type="EC" id="2.1.3.2"/>
    </reaction>
</comment>
<comment type="pathway">
    <text evidence="1">Pyrimidine metabolism; UMP biosynthesis via de novo pathway; (S)-dihydroorotate from bicarbonate: step 2/3.</text>
</comment>
<comment type="subunit">
    <text evidence="1">Heterododecamer (2C3:3R2) of six catalytic PyrB chains organized as two trimers (C3), and six regulatory PyrI chains organized as three dimers (R2).</text>
</comment>
<comment type="similarity">
    <text evidence="1">Belongs to the aspartate/ornithine carbamoyltransferase superfamily. ATCase family.</text>
</comment>
<dbReference type="EC" id="2.1.3.2" evidence="1"/>
<dbReference type="EMBL" id="CP000932">
    <property type="protein sequence ID" value="ACM64375.1"/>
    <property type="molecule type" value="Genomic_DNA"/>
</dbReference>
<dbReference type="RefSeq" id="WP_012661758.1">
    <property type="nucleotide sequence ID" value="NC_012039.1"/>
</dbReference>
<dbReference type="SMR" id="B9KCT6"/>
<dbReference type="STRING" id="306263.Cla_1053"/>
<dbReference type="KEGG" id="cla:CLA_1053"/>
<dbReference type="PATRIC" id="fig|306263.5.peg.1037"/>
<dbReference type="eggNOG" id="COG0540">
    <property type="taxonomic scope" value="Bacteria"/>
</dbReference>
<dbReference type="HOGENOM" id="CLU_043846_2_0_7"/>
<dbReference type="UniPathway" id="UPA00070">
    <property type="reaction ID" value="UER00116"/>
</dbReference>
<dbReference type="Proteomes" id="UP000007727">
    <property type="component" value="Chromosome"/>
</dbReference>
<dbReference type="GO" id="GO:0005829">
    <property type="term" value="C:cytosol"/>
    <property type="evidence" value="ECO:0007669"/>
    <property type="project" value="TreeGrafter"/>
</dbReference>
<dbReference type="GO" id="GO:0016597">
    <property type="term" value="F:amino acid binding"/>
    <property type="evidence" value="ECO:0007669"/>
    <property type="project" value="InterPro"/>
</dbReference>
<dbReference type="GO" id="GO:0004070">
    <property type="term" value="F:aspartate carbamoyltransferase activity"/>
    <property type="evidence" value="ECO:0007669"/>
    <property type="project" value="UniProtKB-UniRule"/>
</dbReference>
<dbReference type="GO" id="GO:0006207">
    <property type="term" value="P:'de novo' pyrimidine nucleobase biosynthetic process"/>
    <property type="evidence" value="ECO:0007669"/>
    <property type="project" value="InterPro"/>
</dbReference>
<dbReference type="GO" id="GO:0044205">
    <property type="term" value="P:'de novo' UMP biosynthetic process"/>
    <property type="evidence" value="ECO:0007669"/>
    <property type="project" value="UniProtKB-UniRule"/>
</dbReference>
<dbReference type="GO" id="GO:0006520">
    <property type="term" value="P:amino acid metabolic process"/>
    <property type="evidence" value="ECO:0007669"/>
    <property type="project" value="InterPro"/>
</dbReference>
<dbReference type="Gene3D" id="3.40.50.1370">
    <property type="entry name" value="Aspartate/ornithine carbamoyltransferase"/>
    <property type="match status" value="2"/>
</dbReference>
<dbReference type="HAMAP" id="MF_00001">
    <property type="entry name" value="Asp_carb_tr"/>
    <property type="match status" value="1"/>
</dbReference>
<dbReference type="InterPro" id="IPR006132">
    <property type="entry name" value="Asp/Orn_carbamoyltranf_P-bd"/>
</dbReference>
<dbReference type="InterPro" id="IPR006130">
    <property type="entry name" value="Asp/Orn_carbamoylTrfase"/>
</dbReference>
<dbReference type="InterPro" id="IPR036901">
    <property type="entry name" value="Asp/Orn_carbamoylTrfase_sf"/>
</dbReference>
<dbReference type="InterPro" id="IPR002082">
    <property type="entry name" value="Asp_carbamoyltransf"/>
</dbReference>
<dbReference type="InterPro" id="IPR006131">
    <property type="entry name" value="Asp_carbamoyltransf_Asp/Orn-bd"/>
</dbReference>
<dbReference type="NCBIfam" id="TIGR00670">
    <property type="entry name" value="asp_carb_tr"/>
    <property type="match status" value="1"/>
</dbReference>
<dbReference type="NCBIfam" id="NF002032">
    <property type="entry name" value="PRK00856.1"/>
    <property type="match status" value="1"/>
</dbReference>
<dbReference type="PANTHER" id="PTHR45753:SF6">
    <property type="entry name" value="ASPARTATE CARBAMOYLTRANSFERASE"/>
    <property type="match status" value="1"/>
</dbReference>
<dbReference type="PANTHER" id="PTHR45753">
    <property type="entry name" value="ORNITHINE CARBAMOYLTRANSFERASE, MITOCHONDRIAL"/>
    <property type="match status" value="1"/>
</dbReference>
<dbReference type="Pfam" id="PF00185">
    <property type="entry name" value="OTCace"/>
    <property type="match status" value="1"/>
</dbReference>
<dbReference type="Pfam" id="PF02729">
    <property type="entry name" value="OTCace_N"/>
    <property type="match status" value="1"/>
</dbReference>
<dbReference type="PRINTS" id="PR00100">
    <property type="entry name" value="AOTCASE"/>
</dbReference>
<dbReference type="PRINTS" id="PR00101">
    <property type="entry name" value="ATCASE"/>
</dbReference>
<dbReference type="SUPFAM" id="SSF53671">
    <property type="entry name" value="Aspartate/ornithine carbamoyltransferase"/>
    <property type="match status" value="1"/>
</dbReference>
<dbReference type="PROSITE" id="PS00097">
    <property type="entry name" value="CARBAMOYLTRANSFERASE"/>
    <property type="match status" value="1"/>
</dbReference>
<keyword id="KW-0665">Pyrimidine biosynthesis</keyword>
<keyword id="KW-1185">Reference proteome</keyword>
<keyword id="KW-0808">Transferase</keyword>
<protein>
    <recommendedName>
        <fullName evidence="1">Aspartate carbamoyltransferase catalytic subunit</fullName>
        <ecNumber evidence="1">2.1.3.2</ecNumber>
    </recommendedName>
    <alternativeName>
        <fullName evidence="1">Aspartate transcarbamylase</fullName>
        <shortName evidence="1">ATCase</shortName>
    </alternativeName>
</protein>